<sequence length="189" mass="20712">MAFPTAEEITQRVQQIVGPRGLDVEKVDIKKAGAKSAVIIRIDGDQRPDLDVIEELSDEISRNFDAAESDGELNFGAGYRLEVSTPGFDEPLLAARHFRRQRGHIATFVLNQADDEHATANAANARFVARVGALNADETELAVVLPGKKEPSVKTYPLDQIREAKLEVEFSTPPEAEMSLVNTPFDQLG</sequence>
<organism>
    <name type="scientific">Corynebacterium kroppenstedtii (strain DSM 44385 / JCM 11950 / CIP 105744 / CCUG 35717)</name>
    <dbReference type="NCBI Taxonomy" id="645127"/>
    <lineage>
        <taxon>Bacteria</taxon>
        <taxon>Bacillati</taxon>
        <taxon>Actinomycetota</taxon>
        <taxon>Actinomycetes</taxon>
        <taxon>Mycobacteriales</taxon>
        <taxon>Corynebacteriaceae</taxon>
        <taxon>Corynebacterium</taxon>
    </lineage>
</organism>
<proteinExistence type="inferred from homology"/>
<feature type="chain" id="PRO_0000384634" description="Ribosome maturation factor RimP">
    <location>
        <begin position="1"/>
        <end position="189"/>
    </location>
</feature>
<comment type="function">
    <text evidence="1">Required for maturation of 30S ribosomal subunits.</text>
</comment>
<comment type="subcellular location">
    <subcellularLocation>
        <location evidence="1">Cytoplasm</location>
    </subcellularLocation>
</comment>
<comment type="similarity">
    <text evidence="1">Belongs to the RimP family.</text>
</comment>
<name>RIMP_CORK4</name>
<gene>
    <name evidence="1" type="primary">rimP</name>
    <name type="ordered locus">ckrop_1145</name>
</gene>
<dbReference type="EMBL" id="CP001620">
    <property type="protein sequence ID" value="ACR17890.1"/>
    <property type="molecule type" value="Genomic_DNA"/>
</dbReference>
<dbReference type="RefSeq" id="WP_012731777.1">
    <property type="nucleotide sequence ID" value="NC_012704.1"/>
</dbReference>
<dbReference type="SMR" id="C4LJ85"/>
<dbReference type="STRING" id="645127.ckrop_1145"/>
<dbReference type="KEGG" id="ckp:ckrop_1145"/>
<dbReference type="eggNOG" id="COG0779">
    <property type="taxonomic scope" value="Bacteria"/>
</dbReference>
<dbReference type="HOGENOM" id="CLU_070525_3_0_11"/>
<dbReference type="OrthoDB" id="9805006at2"/>
<dbReference type="Proteomes" id="UP000001473">
    <property type="component" value="Chromosome"/>
</dbReference>
<dbReference type="GO" id="GO:0005829">
    <property type="term" value="C:cytosol"/>
    <property type="evidence" value="ECO:0007669"/>
    <property type="project" value="TreeGrafter"/>
</dbReference>
<dbReference type="GO" id="GO:0000028">
    <property type="term" value="P:ribosomal small subunit assembly"/>
    <property type="evidence" value="ECO:0007669"/>
    <property type="project" value="TreeGrafter"/>
</dbReference>
<dbReference type="GO" id="GO:0006412">
    <property type="term" value="P:translation"/>
    <property type="evidence" value="ECO:0007669"/>
    <property type="project" value="TreeGrafter"/>
</dbReference>
<dbReference type="Gene3D" id="3.30.300.70">
    <property type="entry name" value="RimP-like superfamily, N-terminal"/>
    <property type="match status" value="1"/>
</dbReference>
<dbReference type="HAMAP" id="MF_01077">
    <property type="entry name" value="RimP"/>
    <property type="match status" value="1"/>
</dbReference>
<dbReference type="InterPro" id="IPR003728">
    <property type="entry name" value="Ribosome_maturation_RimP"/>
</dbReference>
<dbReference type="InterPro" id="IPR028989">
    <property type="entry name" value="RimP_N"/>
</dbReference>
<dbReference type="InterPro" id="IPR035956">
    <property type="entry name" value="RimP_N_sf"/>
</dbReference>
<dbReference type="NCBIfam" id="NF000930">
    <property type="entry name" value="PRK00092.2-2"/>
    <property type="match status" value="1"/>
</dbReference>
<dbReference type="PANTHER" id="PTHR33867">
    <property type="entry name" value="RIBOSOME MATURATION FACTOR RIMP"/>
    <property type="match status" value="1"/>
</dbReference>
<dbReference type="PANTHER" id="PTHR33867:SF1">
    <property type="entry name" value="RIBOSOME MATURATION FACTOR RIMP"/>
    <property type="match status" value="1"/>
</dbReference>
<dbReference type="Pfam" id="PF02576">
    <property type="entry name" value="RimP_N"/>
    <property type="match status" value="1"/>
</dbReference>
<dbReference type="SUPFAM" id="SSF75420">
    <property type="entry name" value="YhbC-like, N-terminal domain"/>
    <property type="match status" value="1"/>
</dbReference>
<evidence type="ECO:0000255" key="1">
    <source>
        <dbReference type="HAMAP-Rule" id="MF_01077"/>
    </source>
</evidence>
<reference key="1">
    <citation type="journal article" date="2008" name="J. Biotechnol.">
        <title>Ultrafast pyrosequencing of Corynebacterium kroppenstedtii DSM44385 revealed insights into the physiology of a lipophilic corynebacterium that lacks mycolic acids.</title>
        <authorList>
            <person name="Tauch A."/>
            <person name="Schneider J."/>
            <person name="Szczepanowski R."/>
            <person name="Tilker A."/>
            <person name="Viehoever P."/>
            <person name="Gartemann K.-H."/>
            <person name="Arnold W."/>
            <person name="Blom J."/>
            <person name="Brinkrolf K."/>
            <person name="Brune I."/>
            <person name="Goetker S."/>
            <person name="Weisshaar B."/>
            <person name="Goesmann A."/>
            <person name="Droege M."/>
            <person name="Puehler A."/>
        </authorList>
    </citation>
    <scope>NUCLEOTIDE SEQUENCE [LARGE SCALE GENOMIC DNA]</scope>
    <source>
        <strain>DSM 44385 / JCM 11950 / CIP 105744 / CCUG 35717</strain>
    </source>
</reference>
<accession>C4LJ85</accession>
<protein>
    <recommendedName>
        <fullName evidence="1">Ribosome maturation factor RimP</fullName>
    </recommendedName>
</protein>
<keyword id="KW-0963">Cytoplasm</keyword>
<keyword id="KW-1185">Reference proteome</keyword>
<keyword id="KW-0690">Ribosome biogenesis</keyword>